<organism>
    <name type="scientific">Salmonella gallinarum (strain 287/91 / NCTC 13346)</name>
    <dbReference type="NCBI Taxonomy" id="550538"/>
    <lineage>
        <taxon>Bacteria</taxon>
        <taxon>Pseudomonadati</taxon>
        <taxon>Pseudomonadota</taxon>
        <taxon>Gammaproteobacteria</taxon>
        <taxon>Enterobacterales</taxon>
        <taxon>Enterobacteriaceae</taxon>
        <taxon>Salmonella</taxon>
    </lineage>
</organism>
<comment type="function">
    <text evidence="1">Produces ATP from ADP in the presence of a proton gradient across the membrane. The alpha chain is a regulatory subunit.</text>
</comment>
<comment type="catalytic activity">
    <reaction evidence="1">
        <text>ATP + H2O + 4 H(+)(in) = ADP + phosphate + 5 H(+)(out)</text>
        <dbReference type="Rhea" id="RHEA:57720"/>
        <dbReference type="ChEBI" id="CHEBI:15377"/>
        <dbReference type="ChEBI" id="CHEBI:15378"/>
        <dbReference type="ChEBI" id="CHEBI:30616"/>
        <dbReference type="ChEBI" id="CHEBI:43474"/>
        <dbReference type="ChEBI" id="CHEBI:456216"/>
        <dbReference type="EC" id="7.1.2.2"/>
    </reaction>
</comment>
<comment type="subunit">
    <text evidence="1">F-type ATPases have 2 components, CF(1) - the catalytic core - and CF(0) - the membrane proton channel. CF(1) has five subunits: alpha(3), beta(3), gamma(1), delta(1), epsilon(1). CF(0) has three main subunits: a(1), b(2) and c(9-12). The alpha and beta chains form an alternating ring which encloses part of the gamma chain. CF(1) is attached to CF(0) by a central stalk formed by the gamma and epsilon chains, while a peripheral stalk is formed by the delta and b chains.</text>
</comment>
<comment type="subcellular location">
    <subcellularLocation>
        <location evidence="1">Cell inner membrane</location>
        <topology evidence="1">Peripheral membrane protein</topology>
    </subcellularLocation>
</comment>
<comment type="similarity">
    <text evidence="1">Belongs to the ATPase alpha/beta chains family.</text>
</comment>
<sequence length="513" mass="55113">MQLNSTEISELIKQRIAQFNVVSEAHNEGTIVSVSDGVIRIHGLADCMQGEMISLPGNRYAIALNLERDSVGAVVMGPYADLAEGMKVKCTGRILEVPVGRGLLGRVVNTLGAPIDGKGPVDNDGFSAVEAIAPGVIDRQSVDQPVQTGYKAVDSMIPIGRGQRELIIGDRQTGKTALAIDAIINQRDSGIKCIYVAIGQKASTISNVVRKLEEHGALANTIVVVATASESAALQYLAPYAGCAMGEYFRDRGEDALIIYDDLSKQAVAYRQISLLLRRPPGREAFPGDVFYLHSRLLERAARVNADYVEAFTKGEVKGKTGSLTALPIIETQAGDVSAFVPTNVISITDGQIFLESNLFNAGIRPAVNPGISVSRVGGAAQTKIMKKLSGGIRTALAQYRELAAFSQFASDLDDATRKQLDHGQKVTELLKQKQYAPMSVAQQSLVLFAAERGYLADVELAKIGSFEAALLAYVDRDHAPLMQEINQSGGYNDEIEGKLKGILDSFKATQSW</sequence>
<gene>
    <name evidence="1" type="primary">atpA</name>
    <name type="ordered locus">SG3566</name>
</gene>
<dbReference type="EC" id="7.1.2.2" evidence="1"/>
<dbReference type="EMBL" id="AM933173">
    <property type="protein sequence ID" value="CAR39355.1"/>
    <property type="molecule type" value="Genomic_DNA"/>
</dbReference>
<dbReference type="RefSeq" id="WP_001176751.1">
    <property type="nucleotide sequence ID" value="NC_011274.1"/>
</dbReference>
<dbReference type="SMR" id="B5RFW1"/>
<dbReference type="GeneID" id="66758156"/>
<dbReference type="KEGG" id="seg:SG3566"/>
<dbReference type="HOGENOM" id="CLU_010091_2_1_6"/>
<dbReference type="Proteomes" id="UP000008321">
    <property type="component" value="Chromosome"/>
</dbReference>
<dbReference type="GO" id="GO:0005886">
    <property type="term" value="C:plasma membrane"/>
    <property type="evidence" value="ECO:0007669"/>
    <property type="project" value="UniProtKB-SubCell"/>
</dbReference>
<dbReference type="GO" id="GO:0045259">
    <property type="term" value="C:proton-transporting ATP synthase complex"/>
    <property type="evidence" value="ECO:0007669"/>
    <property type="project" value="UniProtKB-KW"/>
</dbReference>
<dbReference type="GO" id="GO:0043531">
    <property type="term" value="F:ADP binding"/>
    <property type="evidence" value="ECO:0007669"/>
    <property type="project" value="TreeGrafter"/>
</dbReference>
<dbReference type="GO" id="GO:0005524">
    <property type="term" value="F:ATP binding"/>
    <property type="evidence" value="ECO:0007669"/>
    <property type="project" value="UniProtKB-UniRule"/>
</dbReference>
<dbReference type="GO" id="GO:0046933">
    <property type="term" value="F:proton-transporting ATP synthase activity, rotational mechanism"/>
    <property type="evidence" value="ECO:0007669"/>
    <property type="project" value="UniProtKB-UniRule"/>
</dbReference>
<dbReference type="CDD" id="cd18113">
    <property type="entry name" value="ATP-synt_F1_alpha_C"/>
    <property type="match status" value="1"/>
</dbReference>
<dbReference type="CDD" id="cd18116">
    <property type="entry name" value="ATP-synt_F1_alpha_N"/>
    <property type="match status" value="1"/>
</dbReference>
<dbReference type="CDD" id="cd01132">
    <property type="entry name" value="F1-ATPase_alpha_CD"/>
    <property type="match status" value="1"/>
</dbReference>
<dbReference type="FunFam" id="1.20.150.20:FF:000001">
    <property type="entry name" value="ATP synthase subunit alpha"/>
    <property type="match status" value="1"/>
</dbReference>
<dbReference type="FunFam" id="2.40.30.20:FF:000001">
    <property type="entry name" value="ATP synthase subunit alpha"/>
    <property type="match status" value="1"/>
</dbReference>
<dbReference type="FunFam" id="3.40.50.300:FF:000002">
    <property type="entry name" value="ATP synthase subunit alpha"/>
    <property type="match status" value="1"/>
</dbReference>
<dbReference type="Gene3D" id="2.40.30.20">
    <property type="match status" value="1"/>
</dbReference>
<dbReference type="Gene3D" id="1.20.150.20">
    <property type="entry name" value="ATP synthase alpha/beta chain, C-terminal domain"/>
    <property type="match status" value="1"/>
</dbReference>
<dbReference type="Gene3D" id="3.40.50.300">
    <property type="entry name" value="P-loop containing nucleotide triphosphate hydrolases"/>
    <property type="match status" value="1"/>
</dbReference>
<dbReference type="HAMAP" id="MF_01346">
    <property type="entry name" value="ATP_synth_alpha_bact"/>
    <property type="match status" value="1"/>
</dbReference>
<dbReference type="InterPro" id="IPR023366">
    <property type="entry name" value="ATP_synth_asu-like_sf"/>
</dbReference>
<dbReference type="InterPro" id="IPR000793">
    <property type="entry name" value="ATP_synth_asu_C"/>
</dbReference>
<dbReference type="InterPro" id="IPR038376">
    <property type="entry name" value="ATP_synth_asu_C_sf"/>
</dbReference>
<dbReference type="InterPro" id="IPR033732">
    <property type="entry name" value="ATP_synth_F1_a_nt-bd_dom"/>
</dbReference>
<dbReference type="InterPro" id="IPR005294">
    <property type="entry name" value="ATP_synth_F1_asu"/>
</dbReference>
<dbReference type="InterPro" id="IPR020003">
    <property type="entry name" value="ATPase_a/bsu_AS"/>
</dbReference>
<dbReference type="InterPro" id="IPR004100">
    <property type="entry name" value="ATPase_F1/V1/A1_a/bsu_N"/>
</dbReference>
<dbReference type="InterPro" id="IPR036121">
    <property type="entry name" value="ATPase_F1/V1/A1_a/bsu_N_sf"/>
</dbReference>
<dbReference type="InterPro" id="IPR000194">
    <property type="entry name" value="ATPase_F1/V1/A1_a/bsu_nucl-bd"/>
</dbReference>
<dbReference type="InterPro" id="IPR027417">
    <property type="entry name" value="P-loop_NTPase"/>
</dbReference>
<dbReference type="NCBIfam" id="TIGR00962">
    <property type="entry name" value="atpA"/>
    <property type="match status" value="1"/>
</dbReference>
<dbReference type="NCBIfam" id="NF009884">
    <property type="entry name" value="PRK13343.1"/>
    <property type="match status" value="1"/>
</dbReference>
<dbReference type="PANTHER" id="PTHR48082">
    <property type="entry name" value="ATP SYNTHASE SUBUNIT ALPHA, MITOCHONDRIAL"/>
    <property type="match status" value="1"/>
</dbReference>
<dbReference type="PANTHER" id="PTHR48082:SF2">
    <property type="entry name" value="ATP SYNTHASE SUBUNIT ALPHA, MITOCHONDRIAL"/>
    <property type="match status" value="1"/>
</dbReference>
<dbReference type="Pfam" id="PF00006">
    <property type="entry name" value="ATP-synt_ab"/>
    <property type="match status" value="1"/>
</dbReference>
<dbReference type="Pfam" id="PF00306">
    <property type="entry name" value="ATP-synt_ab_C"/>
    <property type="match status" value="1"/>
</dbReference>
<dbReference type="Pfam" id="PF02874">
    <property type="entry name" value="ATP-synt_ab_N"/>
    <property type="match status" value="1"/>
</dbReference>
<dbReference type="SUPFAM" id="SSF47917">
    <property type="entry name" value="C-terminal domain of alpha and beta subunits of F1 ATP synthase"/>
    <property type="match status" value="1"/>
</dbReference>
<dbReference type="SUPFAM" id="SSF50615">
    <property type="entry name" value="N-terminal domain of alpha and beta subunits of F1 ATP synthase"/>
    <property type="match status" value="1"/>
</dbReference>
<dbReference type="SUPFAM" id="SSF52540">
    <property type="entry name" value="P-loop containing nucleoside triphosphate hydrolases"/>
    <property type="match status" value="1"/>
</dbReference>
<dbReference type="PROSITE" id="PS00152">
    <property type="entry name" value="ATPASE_ALPHA_BETA"/>
    <property type="match status" value="1"/>
</dbReference>
<reference key="1">
    <citation type="journal article" date="2008" name="Genome Res.">
        <title>Comparative genome analysis of Salmonella enteritidis PT4 and Salmonella gallinarum 287/91 provides insights into evolutionary and host adaptation pathways.</title>
        <authorList>
            <person name="Thomson N.R."/>
            <person name="Clayton D.J."/>
            <person name="Windhorst D."/>
            <person name="Vernikos G."/>
            <person name="Davidson S."/>
            <person name="Churcher C."/>
            <person name="Quail M.A."/>
            <person name="Stevens M."/>
            <person name="Jones M.A."/>
            <person name="Watson M."/>
            <person name="Barron A."/>
            <person name="Layton A."/>
            <person name="Pickard D."/>
            <person name="Kingsley R.A."/>
            <person name="Bignell A."/>
            <person name="Clark L."/>
            <person name="Harris B."/>
            <person name="Ormond D."/>
            <person name="Abdellah Z."/>
            <person name="Brooks K."/>
            <person name="Cherevach I."/>
            <person name="Chillingworth T."/>
            <person name="Woodward J."/>
            <person name="Norberczak H."/>
            <person name="Lord A."/>
            <person name="Arrowsmith C."/>
            <person name="Jagels K."/>
            <person name="Moule S."/>
            <person name="Mungall K."/>
            <person name="Saunders M."/>
            <person name="Whitehead S."/>
            <person name="Chabalgoity J.A."/>
            <person name="Maskell D."/>
            <person name="Humphreys T."/>
            <person name="Roberts M."/>
            <person name="Barrow P.A."/>
            <person name="Dougan G."/>
            <person name="Parkhill J."/>
        </authorList>
    </citation>
    <scope>NUCLEOTIDE SEQUENCE [LARGE SCALE GENOMIC DNA]</scope>
    <source>
        <strain>287/91 / NCTC 13346</strain>
    </source>
</reference>
<protein>
    <recommendedName>
        <fullName evidence="1">ATP synthase subunit alpha</fullName>
        <ecNumber evidence="1">7.1.2.2</ecNumber>
    </recommendedName>
    <alternativeName>
        <fullName evidence="1">ATP synthase F1 sector subunit alpha</fullName>
    </alternativeName>
    <alternativeName>
        <fullName evidence="1">F-ATPase subunit alpha</fullName>
    </alternativeName>
</protein>
<evidence type="ECO:0000255" key="1">
    <source>
        <dbReference type="HAMAP-Rule" id="MF_01346"/>
    </source>
</evidence>
<feature type="chain" id="PRO_1000143431" description="ATP synthase subunit alpha">
    <location>
        <begin position="1"/>
        <end position="513"/>
    </location>
</feature>
<feature type="binding site" evidence="1">
    <location>
        <begin position="169"/>
        <end position="176"/>
    </location>
    <ligand>
        <name>ATP</name>
        <dbReference type="ChEBI" id="CHEBI:30616"/>
    </ligand>
</feature>
<feature type="site" description="Required for activity" evidence="1">
    <location>
        <position position="373"/>
    </location>
</feature>
<proteinExistence type="inferred from homology"/>
<keyword id="KW-0066">ATP synthesis</keyword>
<keyword id="KW-0067">ATP-binding</keyword>
<keyword id="KW-0997">Cell inner membrane</keyword>
<keyword id="KW-1003">Cell membrane</keyword>
<keyword id="KW-0139">CF(1)</keyword>
<keyword id="KW-0375">Hydrogen ion transport</keyword>
<keyword id="KW-0406">Ion transport</keyword>
<keyword id="KW-0472">Membrane</keyword>
<keyword id="KW-0547">Nucleotide-binding</keyword>
<keyword id="KW-1278">Translocase</keyword>
<keyword id="KW-0813">Transport</keyword>
<accession>B5RFW1</accession>
<name>ATPA_SALG2</name>